<name>QUEF_NITOC</name>
<feature type="chain" id="PRO_0000247684" description="NADPH-dependent 7-cyano-7-deazaguanine reductase">
    <location>
        <begin position="1"/>
        <end position="129"/>
    </location>
</feature>
<feature type="active site" description="Thioimide intermediate" evidence="1">
    <location>
        <position position="34"/>
    </location>
</feature>
<feature type="active site" description="Proton donor" evidence="1">
    <location>
        <position position="41"/>
    </location>
</feature>
<feature type="binding site" evidence="1">
    <location>
        <begin position="56"/>
        <end position="58"/>
    </location>
    <ligand>
        <name>substrate</name>
    </ligand>
</feature>
<feature type="binding site" evidence="1">
    <location>
        <begin position="75"/>
        <end position="76"/>
    </location>
    <ligand>
        <name>substrate</name>
    </ligand>
</feature>
<proteinExistence type="inferred from homology"/>
<protein>
    <recommendedName>
        <fullName evidence="1">NADPH-dependent 7-cyano-7-deazaguanine reductase</fullName>
        <ecNumber evidence="1">1.7.1.13</ecNumber>
    </recommendedName>
    <alternativeName>
        <fullName evidence="1">7-cyano-7-carbaguanine reductase</fullName>
    </alternativeName>
    <alternativeName>
        <fullName evidence="1">NADPH-dependent nitrile oxidoreductase</fullName>
    </alternativeName>
    <alternativeName>
        <fullName evidence="1">PreQ(0) reductase</fullName>
    </alternativeName>
</protein>
<sequence>MPSQPNRELETFANPLPERDYTIRIRIPEFTCLCPKTGQPDFATLQLEYVPDQACVELKSLKLYIWSYRDQGAFHEAVTNQILDDLTAVCKPRFMRLTAEFNVRGGIYTTVAAEYRQPGWDAPKIVRLP</sequence>
<gene>
    <name evidence="1" type="primary">queF</name>
    <name type="ordered locus">Noc_1696</name>
</gene>
<accession>Q3JAH8</accession>
<evidence type="ECO:0000255" key="1">
    <source>
        <dbReference type="HAMAP-Rule" id="MF_00818"/>
    </source>
</evidence>
<dbReference type="EC" id="1.7.1.13" evidence="1"/>
<dbReference type="EMBL" id="CP000127">
    <property type="protein sequence ID" value="ABA58168.1"/>
    <property type="molecule type" value="Genomic_DNA"/>
</dbReference>
<dbReference type="RefSeq" id="WP_002808630.1">
    <property type="nucleotide sequence ID" value="NC_007484.1"/>
</dbReference>
<dbReference type="SMR" id="Q3JAH8"/>
<dbReference type="STRING" id="323261.Noc_1696"/>
<dbReference type="KEGG" id="noc:Noc_1696"/>
<dbReference type="eggNOG" id="COG0780">
    <property type="taxonomic scope" value="Bacteria"/>
</dbReference>
<dbReference type="HOGENOM" id="CLU_102489_1_0_6"/>
<dbReference type="InParanoid" id="Q3JAH8"/>
<dbReference type="UniPathway" id="UPA00392"/>
<dbReference type="Proteomes" id="UP000006838">
    <property type="component" value="Chromosome"/>
</dbReference>
<dbReference type="GO" id="GO:0005737">
    <property type="term" value="C:cytoplasm"/>
    <property type="evidence" value="ECO:0007669"/>
    <property type="project" value="UniProtKB-SubCell"/>
</dbReference>
<dbReference type="GO" id="GO:0033739">
    <property type="term" value="F:preQ1 synthase activity"/>
    <property type="evidence" value="ECO:0007669"/>
    <property type="project" value="UniProtKB-UniRule"/>
</dbReference>
<dbReference type="GO" id="GO:0008616">
    <property type="term" value="P:queuosine biosynthetic process"/>
    <property type="evidence" value="ECO:0007669"/>
    <property type="project" value="UniProtKB-UniRule"/>
</dbReference>
<dbReference type="GO" id="GO:0006400">
    <property type="term" value="P:tRNA modification"/>
    <property type="evidence" value="ECO:0007669"/>
    <property type="project" value="UniProtKB-UniRule"/>
</dbReference>
<dbReference type="Gene3D" id="3.30.1130.10">
    <property type="match status" value="1"/>
</dbReference>
<dbReference type="HAMAP" id="MF_00818">
    <property type="entry name" value="QueF_type1"/>
    <property type="match status" value="1"/>
</dbReference>
<dbReference type="InterPro" id="IPR043133">
    <property type="entry name" value="GTP-CH-I_C/QueF"/>
</dbReference>
<dbReference type="InterPro" id="IPR050084">
    <property type="entry name" value="NADPH_dep_7-cyano-7-deazaG_red"/>
</dbReference>
<dbReference type="InterPro" id="IPR029500">
    <property type="entry name" value="QueF"/>
</dbReference>
<dbReference type="InterPro" id="IPR016856">
    <property type="entry name" value="QueF_type1"/>
</dbReference>
<dbReference type="NCBIfam" id="TIGR03139">
    <property type="entry name" value="QueF-II"/>
    <property type="match status" value="1"/>
</dbReference>
<dbReference type="PANTHER" id="PTHR34354">
    <property type="entry name" value="NADPH-DEPENDENT 7-CYANO-7-DEAZAGUANINE REDUCTASE"/>
    <property type="match status" value="1"/>
</dbReference>
<dbReference type="PANTHER" id="PTHR34354:SF1">
    <property type="entry name" value="NADPH-DEPENDENT 7-CYANO-7-DEAZAGUANINE REDUCTASE"/>
    <property type="match status" value="1"/>
</dbReference>
<dbReference type="Pfam" id="PF14489">
    <property type="entry name" value="QueF"/>
    <property type="match status" value="1"/>
</dbReference>
<dbReference type="PIRSF" id="PIRSF027377">
    <property type="entry name" value="Nitrile_oxidored_QueF"/>
    <property type="match status" value="1"/>
</dbReference>
<dbReference type="SUPFAM" id="SSF55620">
    <property type="entry name" value="Tetrahydrobiopterin biosynthesis enzymes-like"/>
    <property type="match status" value="1"/>
</dbReference>
<comment type="function">
    <text evidence="1">Catalyzes the NADPH-dependent reduction of 7-cyano-7-deazaguanine (preQ0) to 7-aminomethyl-7-deazaguanine (preQ1).</text>
</comment>
<comment type="catalytic activity">
    <reaction evidence="1">
        <text>7-aminomethyl-7-carbaguanine + 2 NADP(+) = 7-cyano-7-deazaguanine + 2 NADPH + 3 H(+)</text>
        <dbReference type="Rhea" id="RHEA:13409"/>
        <dbReference type="ChEBI" id="CHEBI:15378"/>
        <dbReference type="ChEBI" id="CHEBI:45075"/>
        <dbReference type="ChEBI" id="CHEBI:57783"/>
        <dbReference type="ChEBI" id="CHEBI:58349"/>
        <dbReference type="ChEBI" id="CHEBI:58703"/>
        <dbReference type="EC" id="1.7.1.13"/>
    </reaction>
</comment>
<comment type="pathway">
    <text evidence="1">tRNA modification; tRNA-queuosine biosynthesis.</text>
</comment>
<comment type="subcellular location">
    <subcellularLocation>
        <location evidence="1">Cytoplasm</location>
    </subcellularLocation>
</comment>
<comment type="similarity">
    <text evidence="1">Belongs to the GTP cyclohydrolase I family. QueF type 1 subfamily.</text>
</comment>
<organism>
    <name type="scientific">Nitrosococcus oceani (strain ATCC 19707 / BCRC 17464 / JCM 30415 / NCIMB 11848 / C-107)</name>
    <dbReference type="NCBI Taxonomy" id="323261"/>
    <lineage>
        <taxon>Bacteria</taxon>
        <taxon>Pseudomonadati</taxon>
        <taxon>Pseudomonadota</taxon>
        <taxon>Gammaproteobacteria</taxon>
        <taxon>Chromatiales</taxon>
        <taxon>Chromatiaceae</taxon>
        <taxon>Nitrosococcus</taxon>
    </lineage>
</organism>
<keyword id="KW-0963">Cytoplasm</keyword>
<keyword id="KW-0521">NADP</keyword>
<keyword id="KW-0560">Oxidoreductase</keyword>
<keyword id="KW-0671">Queuosine biosynthesis</keyword>
<keyword id="KW-1185">Reference proteome</keyword>
<reference key="1">
    <citation type="journal article" date="2006" name="Appl. Environ. Microbiol.">
        <title>Complete genome sequence of the marine, chemolithoautotrophic, ammonia-oxidizing bacterium Nitrosococcus oceani ATCC 19707.</title>
        <authorList>
            <person name="Klotz M.G."/>
            <person name="Arp D.J."/>
            <person name="Chain P.S.G."/>
            <person name="El-Sheikh A.F."/>
            <person name="Hauser L.J."/>
            <person name="Hommes N.G."/>
            <person name="Larimer F.W."/>
            <person name="Malfatti S.A."/>
            <person name="Norton J.M."/>
            <person name="Poret-Peterson A.T."/>
            <person name="Vergez L.M."/>
            <person name="Ward B.B."/>
        </authorList>
    </citation>
    <scope>NUCLEOTIDE SEQUENCE [LARGE SCALE GENOMIC DNA]</scope>
    <source>
        <strain>ATCC 19707 / BCRC 17464 / JCM 30415 / NCIMB 11848 / C-107</strain>
    </source>
</reference>